<protein>
    <recommendedName>
        <fullName>Peptide transport system ATP-binding protein SapD</fullName>
    </recommendedName>
</protein>
<dbReference type="EMBL" id="AE005174">
    <property type="protein sequence ID" value="AAG56513.1"/>
    <property type="molecule type" value="Genomic_DNA"/>
</dbReference>
<dbReference type="EMBL" id="BA000007">
    <property type="protein sequence ID" value="BAB35291.1"/>
    <property type="molecule type" value="Genomic_DNA"/>
</dbReference>
<dbReference type="PIR" id="D90862">
    <property type="entry name" value="D90862"/>
</dbReference>
<dbReference type="PIR" id="E85756">
    <property type="entry name" value="E85756"/>
</dbReference>
<dbReference type="RefSeq" id="NP_309895.1">
    <property type="nucleotide sequence ID" value="NC_002695.1"/>
</dbReference>
<dbReference type="RefSeq" id="WP_001128858.1">
    <property type="nucleotide sequence ID" value="NZ_VOAI01000015.1"/>
</dbReference>
<dbReference type="SMR" id="P0AAH6"/>
<dbReference type="STRING" id="155864.Z2499"/>
<dbReference type="GeneID" id="912736"/>
<dbReference type="GeneID" id="93775416"/>
<dbReference type="KEGG" id="ece:Z2499"/>
<dbReference type="KEGG" id="ecs:ECs_1868"/>
<dbReference type="PATRIC" id="fig|386585.9.peg.1970"/>
<dbReference type="eggNOG" id="COG4172">
    <property type="taxonomic scope" value="Bacteria"/>
</dbReference>
<dbReference type="HOGENOM" id="CLU_000604_1_23_6"/>
<dbReference type="OMA" id="QRFNWRK"/>
<dbReference type="Proteomes" id="UP000000558">
    <property type="component" value="Chromosome"/>
</dbReference>
<dbReference type="Proteomes" id="UP000002519">
    <property type="component" value="Chromosome"/>
</dbReference>
<dbReference type="GO" id="GO:0005886">
    <property type="term" value="C:plasma membrane"/>
    <property type="evidence" value="ECO:0007669"/>
    <property type="project" value="UniProtKB-SubCell"/>
</dbReference>
<dbReference type="GO" id="GO:0005524">
    <property type="term" value="F:ATP binding"/>
    <property type="evidence" value="ECO:0007669"/>
    <property type="project" value="UniProtKB-KW"/>
</dbReference>
<dbReference type="GO" id="GO:0016887">
    <property type="term" value="F:ATP hydrolysis activity"/>
    <property type="evidence" value="ECO:0007669"/>
    <property type="project" value="InterPro"/>
</dbReference>
<dbReference type="GO" id="GO:0015833">
    <property type="term" value="P:peptide transport"/>
    <property type="evidence" value="ECO:0007669"/>
    <property type="project" value="UniProtKB-KW"/>
</dbReference>
<dbReference type="GO" id="GO:0015031">
    <property type="term" value="P:protein transport"/>
    <property type="evidence" value="ECO:0007669"/>
    <property type="project" value="UniProtKB-KW"/>
</dbReference>
<dbReference type="CDD" id="cd03257">
    <property type="entry name" value="ABC_NikE_OppD_transporters"/>
    <property type="match status" value="1"/>
</dbReference>
<dbReference type="FunFam" id="3.40.50.300:FF:000443">
    <property type="entry name" value="Peptide transport system ATP-binding protein SapD"/>
    <property type="match status" value="1"/>
</dbReference>
<dbReference type="Gene3D" id="3.40.50.300">
    <property type="entry name" value="P-loop containing nucleotide triphosphate hydrolases"/>
    <property type="match status" value="1"/>
</dbReference>
<dbReference type="InterPro" id="IPR003593">
    <property type="entry name" value="AAA+_ATPase"/>
</dbReference>
<dbReference type="InterPro" id="IPR050388">
    <property type="entry name" value="ABC_Ni/Peptide_Import"/>
</dbReference>
<dbReference type="InterPro" id="IPR003439">
    <property type="entry name" value="ABC_transporter-like_ATP-bd"/>
</dbReference>
<dbReference type="InterPro" id="IPR013563">
    <property type="entry name" value="Oligopep_ABC_C"/>
</dbReference>
<dbReference type="InterPro" id="IPR027417">
    <property type="entry name" value="P-loop_NTPase"/>
</dbReference>
<dbReference type="NCBIfam" id="TIGR01727">
    <property type="entry name" value="oligo_HPY"/>
    <property type="match status" value="1"/>
</dbReference>
<dbReference type="NCBIfam" id="NF011674">
    <property type="entry name" value="PRK15093.1"/>
    <property type="match status" value="1"/>
</dbReference>
<dbReference type="PANTHER" id="PTHR43297">
    <property type="entry name" value="OLIGOPEPTIDE TRANSPORT ATP-BINDING PROTEIN APPD"/>
    <property type="match status" value="1"/>
</dbReference>
<dbReference type="PANTHER" id="PTHR43297:SF4">
    <property type="entry name" value="PUTRESCINE EXPORT SYSTEM ATP-BINDING PROTEIN SAPD"/>
    <property type="match status" value="1"/>
</dbReference>
<dbReference type="Pfam" id="PF00005">
    <property type="entry name" value="ABC_tran"/>
    <property type="match status" value="1"/>
</dbReference>
<dbReference type="Pfam" id="PF08352">
    <property type="entry name" value="oligo_HPY"/>
    <property type="match status" value="1"/>
</dbReference>
<dbReference type="SMART" id="SM00382">
    <property type="entry name" value="AAA"/>
    <property type="match status" value="1"/>
</dbReference>
<dbReference type="SUPFAM" id="SSF52540">
    <property type="entry name" value="P-loop containing nucleoside triphosphate hydrolases"/>
    <property type="match status" value="1"/>
</dbReference>
<dbReference type="PROSITE" id="PS50893">
    <property type="entry name" value="ABC_TRANSPORTER_2"/>
    <property type="match status" value="1"/>
</dbReference>
<gene>
    <name type="primary">sapD</name>
    <name type="ordered locus">Z2499</name>
    <name type="ordered locus">ECs1868</name>
</gene>
<reference key="1">
    <citation type="journal article" date="2001" name="Nature">
        <title>Genome sequence of enterohaemorrhagic Escherichia coli O157:H7.</title>
        <authorList>
            <person name="Perna N.T."/>
            <person name="Plunkett G. III"/>
            <person name="Burland V."/>
            <person name="Mau B."/>
            <person name="Glasner J.D."/>
            <person name="Rose D.J."/>
            <person name="Mayhew G.F."/>
            <person name="Evans P.S."/>
            <person name="Gregor J."/>
            <person name="Kirkpatrick H.A."/>
            <person name="Posfai G."/>
            <person name="Hackett J."/>
            <person name="Klink S."/>
            <person name="Boutin A."/>
            <person name="Shao Y."/>
            <person name="Miller L."/>
            <person name="Grotbeck E.J."/>
            <person name="Davis N.W."/>
            <person name="Lim A."/>
            <person name="Dimalanta E.T."/>
            <person name="Potamousis K."/>
            <person name="Apodaca J."/>
            <person name="Anantharaman T.S."/>
            <person name="Lin J."/>
            <person name="Yen G."/>
            <person name="Schwartz D.C."/>
            <person name="Welch R.A."/>
            <person name="Blattner F.R."/>
        </authorList>
    </citation>
    <scope>NUCLEOTIDE SEQUENCE [LARGE SCALE GENOMIC DNA]</scope>
    <source>
        <strain>O157:H7 / EDL933 / ATCC 700927 / EHEC</strain>
    </source>
</reference>
<reference key="2">
    <citation type="journal article" date="2001" name="DNA Res.">
        <title>Complete genome sequence of enterohemorrhagic Escherichia coli O157:H7 and genomic comparison with a laboratory strain K-12.</title>
        <authorList>
            <person name="Hayashi T."/>
            <person name="Makino K."/>
            <person name="Ohnishi M."/>
            <person name="Kurokawa K."/>
            <person name="Ishii K."/>
            <person name="Yokoyama K."/>
            <person name="Han C.-G."/>
            <person name="Ohtsubo E."/>
            <person name="Nakayama K."/>
            <person name="Murata T."/>
            <person name="Tanaka M."/>
            <person name="Tobe T."/>
            <person name="Iida T."/>
            <person name="Takami H."/>
            <person name="Honda T."/>
            <person name="Sasakawa C."/>
            <person name="Ogasawara N."/>
            <person name="Yasunaga T."/>
            <person name="Kuhara S."/>
            <person name="Shiba T."/>
            <person name="Hattori M."/>
            <person name="Shinagawa H."/>
        </authorList>
    </citation>
    <scope>NUCLEOTIDE SEQUENCE [LARGE SCALE GENOMIC DNA]</scope>
    <source>
        <strain>O157:H7 / Sakai / RIMD 0509952 / EHEC</strain>
    </source>
</reference>
<comment type="function">
    <text evidence="1">Involved in a peptide intake transport system that plays a role in the resistance to antimicrobial peptides.</text>
</comment>
<comment type="subcellular location">
    <subcellularLocation>
        <location evidence="3">Cell inner membrane</location>
        <topology evidence="3">Peripheral membrane protein</topology>
    </subcellularLocation>
</comment>
<comment type="similarity">
    <text evidence="3">Belongs to the ABC transporter superfamily.</text>
</comment>
<evidence type="ECO:0000250" key="1"/>
<evidence type="ECO:0000255" key="2">
    <source>
        <dbReference type="PROSITE-ProRule" id="PRU00434"/>
    </source>
</evidence>
<evidence type="ECO:0000305" key="3"/>
<sequence length="330" mass="37661">MPLLDIRNLTIEFKTGDEWVKAVDRVSMTLTEGEIRGLVGESGSGKSLIAKAICGVNKDNWRVTADRMRFDDIDLLRLSARERRKLVGHNVSMIFQEPQSCLDPSERVGRQLMQNIPAWTYKGRWWQRFGWRKRRAIELLHRVGIKDHKDAMRSFPYELTEGECQKVMIAIALANQPRLLIADEPTNSMEPTTQAQIFRLLTRLNQNSNTTILLISHDLQMLSQWADKINVLYCGQTVETAPSKELVTMPHHPYTQALIRAIPDFGSAMPHKSRLNTLPGAIPLLEQLPIGCRLGPRCPYAQRECIVTPRLTGAKNHLYACHFPLNMEKE</sequence>
<proteinExistence type="inferred from homology"/>
<name>SAPD_ECO57</name>
<keyword id="KW-0067">ATP-binding</keyword>
<keyword id="KW-0997">Cell inner membrane</keyword>
<keyword id="KW-1003">Cell membrane</keyword>
<keyword id="KW-0472">Membrane</keyword>
<keyword id="KW-0547">Nucleotide-binding</keyword>
<keyword id="KW-0571">Peptide transport</keyword>
<keyword id="KW-0653">Protein transport</keyword>
<keyword id="KW-1185">Reference proteome</keyword>
<keyword id="KW-0813">Transport</keyword>
<feature type="chain" id="PRO_0000092963" description="Peptide transport system ATP-binding protein SapD">
    <location>
        <begin position="1"/>
        <end position="330"/>
    </location>
</feature>
<feature type="domain" description="ABC transporter" evidence="2">
    <location>
        <begin position="6"/>
        <end position="259"/>
    </location>
</feature>
<feature type="binding site" evidence="2">
    <location>
        <begin position="40"/>
        <end position="47"/>
    </location>
    <ligand>
        <name>ATP</name>
        <dbReference type="ChEBI" id="CHEBI:30616"/>
    </ligand>
</feature>
<organism>
    <name type="scientific">Escherichia coli O157:H7</name>
    <dbReference type="NCBI Taxonomy" id="83334"/>
    <lineage>
        <taxon>Bacteria</taxon>
        <taxon>Pseudomonadati</taxon>
        <taxon>Pseudomonadota</taxon>
        <taxon>Gammaproteobacteria</taxon>
        <taxon>Enterobacterales</taxon>
        <taxon>Enterobacteriaceae</taxon>
        <taxon>Escherichia</taxon>
    </lineage>
</organism>
<accession>P0AAH6</accession>
<accession>P36635</accession>